<feature type="chain" id="PRO_0000288324" description="Proline--tRNA ligase">
    <location>
        <begin position="1"/>
        <end position="574"/>
    </location>
</feature>
<protein>
    <recommendedName>
        <fullName evidence="1">Proline--tRNA ligase</fullName>
        <ecNumber evidence="1">6.1.1.15</ecNumber>
    </recommendedName>
    <alternativeName>
        <fullName evidence="1">Prolyl-tRNA synthetase</fullName>
        <shortName evidence="1">ProRS</shortName>
    </alternativeName>
</protein>
<proteinExistence type="inferred from homology"/>
<name>SYP_NITV4</name>
<dbReference type="EC" id="6.1.1.15" evidence="1"/>
<dbReference type="EMBL" id="CP000527">
    <property type="protein sequence ID" value="ABM28740.1"/>
    <property type="molecule type" value="Genomic_DNA"/>
</dbReference>
<dbReference type="RefSeq" id="WP_011792444.1">
    <property type="nucleotide sequence ID" value="NC_008751.1"/>
</dbReference>
<dbReference type="SMR" id="A1VE74"/>
<dbReference type="KEGG" id="dvl:Dvul_1723"/>
<dbReference type="HOGENOM" id="CLU_016739_0_0_7"/>
<dbReference type="Proteomes" id="UP000009173">
    <property type="component" value="Chromosome"/>
</dbReference>
<dbReference type="GO" id="GO:0005829">
    <property type="term" value="C:cytosol"/>
    <property type="evidence" value="ECO:0007669"/>
    <property type="project" value="TreeGrafter"/>
</dbReference>
<dbReference type="GO" id="GO:0002161">
    <property type="term" value="F:aminoacyl-tRNA deacylase activity"/>
    <property type="evidence" value="ECO:0007669"/>
    <property type="project" value="InterPro"/>
</dbReference>
<dbReference type="GO" id="GO:0005524">
    <property type="term" value="F:ATP binding"/>
    <property type="evidence" value="ECO:0007669"/>
    <property type="project" value="UniProtKB-UniRule"/>
</dbReference>
<dbReference type="GO" id="GO:0004827">
    <property type="term" value="F:proline-tRNA ligase activity"/>
    <property type="evidence" value="ECO:0007669"/>
    <property type="project" value="UniProtKB-UniRule"/>
</dbReference>
<dbReference type="GO" id="GO:0006433">
    <property type="term" value="P:prolyl-tRNA aminoacylation"/>
    <property type="evidence" value="ECO:0007669"/>
    <property type="project" value="UniProtKB-UniRule"/>
</dbReference>
<dbReference type="CDD" id="cd04334">
    <property type="entry name" value="ProRS-INS"/>
    <property type="match status" value="1"/>
</dbReference>
<dbReference type="CDD" id="cd00861">
    <property type="entry name" value="ProRS_anticodon_short"/>
    <property type="match status" value="1"/>
</dbReference>
<dbReference type="CDD" id="cd00779">
    <property type="entry name" value="ProRS_core_prok"/>
    <property type="match status" value="1"/>
</dbReference>
<dbReference type="FunFam" id="3.30.930.10:FF:000012">
    <property type="entry name" value="Proline--tRNA ligase"/>
    <property type="match status" value="1"/>
</dbReference>
<dbReference type="FunFam" id="3.30.930.10:FF:000065">
    <property type="entry name" value="Proline--tRNA ligase"/>
    <property type="match status" value="1"/>
</dbReference>
<dbReference type="Gene3D" id="3.40.50.800">
    <property type="entry name" value="Anticodon-binding domain"/>
    <property type="match status" value="1"/>
</dbReference>
<dbReference type="Gene3D" id="3.30.930.10">
    <property type="entry name" value="Bira Bifunctional Protein, Domain 2"/>
    <property type="match status" value="2"/>
</dbReference>
<dbReference type="Gene3D" id="3.90.960.10">
    <property type="entry name" value="YbaK/aminoacyl-tRNA synthetase-associated domain"/>
    <property type="match status" value="1"/>
</dbReference>
<dbReference type="HAMAP" id="MF_01569">
    <property type="entry name" value="Pro_tRNA_synth_type1"/>
    <property type="match status" value="1"/>
</dbReference>
<dbReference type="InterPro" id="IPR002314">
    <property type="entry name" value="aa-tRNA-synt_IIb"/>
</dbReference>
<dbReference type="InterPro" id="IPR006195">
    <property type="entry name" value="aa-tRNA-synth_II"/>
</dbReference>
<dbReference type="InterPro" id="IPR045864">
    <property type="entry name" value="aa-tRNA-synth_II/BPL/LPL"/>
</dbReference>
<dbReference type="InterPro" id="IPR004154">
    <property type="entry name" value="Anticodon-bd"/>
</dbReference>
<dbReference type="InterPro" id="IPR036621">
    <property type="entry name" value="Anticodon-bd_dom_sf"/>
</dbReference>
<dbReference type="InterPro" id="IPR002316">
    <property type="entry name" value="Pro-tRNA-ligase_IIa"/>
</dbReference>
<dbReference type="InterPro" id="IPR004500">
    <property type="entry name" value="Pro-tRNA-synth_IIa_bac-type"/>
</dbReference>
<dbReference type="InterPro" id="IPR023717">
    <property type="entry name" value="Pro-tRNA-Synthase_IIa_type1"/>
</dbReference>
<dbReference type="InterPro" id="IPR050062">
    <property type="entry name" value="Pro-tRNA_synthetase"/>
</dbReference>
<dbReference type="InterPro" id="IPR044140">
    <property type="entry name" value="ProRS_anticodon_short"/>
</dbReference>
<dbReference type="InterPro" id="IPR033730">
    <property type="entry name" value="ProRS_core_prok"/>
</dbReference>
<dbReference type="InterPro" id="IPR036754">
    <property type="entry name" value="YbaK/aa-tRNA-synt-asso_dom_sf"/>
</dbReference>
<dbReference type="InterPro" id="IPR007214">
    <property type="entry name" value="YbaK/aa-tRNA-synth-assoc-dom"/>
</dbReference>
<dbReference type="NCBIfam" id="NF006625">
    <property type="entry name" value="PRK09194.1"/>
    <property type="match status" value="1"/>
</dbReference>
<dbReference type="NCBIfam" id="TIGR00409">
    <property type="entry name" value="proS_fam_II"/>
    <property type="match status" value="1"/>
</dbReference>
<dbReference type="PANTHER" id="PTHR42753">
    <property type="entry name" value="MITOCHONDRIAL RIBOSOME PROTEIN L39/PROLYL-TRNA LIGASE FAMILY MEMBER"/>
    <property type="match status" value="1"/>
</dbReference>
<dbReference type="PANTHER" id="PTHR42753:SF2">
    <property type="entry name" value="PROLINE--TRNA LIGASE"/>
    <property type="match status" value="1"/>
</dbReference>
<dbReference type="Pfam" id="PF03129">
    <property type="entry name" value="HGTP_anticodon"/>
    <property type="match status" value="1"/>
</dbReference>
<dbReference type="Pfam" id="PF00587">
    <property type="entry name" value="tRNA-synt_2b"/>
    <property type="match status" value="1"/>
</dbReference>
<dbReference type="Pfam" id="PF04073">
    <property type="entry name" value="tRNA_edit"/>
    <property type="match status" value="1"/>
</dbReference>
<dbReference type="PIRSF" id="PIRSF001535">
    <property type="entry name" value="ProRS_1"/>
    <property type="match status" value="1"/>
</dbReference>
<dbReference type="PRINTS" id="PR01046">
    <property type="entry name" value="TRNASYNTHPRO"/>
</dbReference>
<dbReference type="SUPFAM" id="SSF52954">
    <property type="entry name" value="Class II aaRS ABD-related"/>
    <property type="match status" value="1"/>
</dbReference>
<dbReference type="SUPFAM" id="SSF55681">
    <property type="entry name" value="Class II aaRS and biotin synthetases"/>
    <property type="match status" value="1"/>
</dbReference>
<dbReference type="SUPFAM" id="SSF55826">
    <property type="entry name" value="YbaK/ProRS associated domain"/>
    <property type="match status" value="1"/>
</dbReference>
<dbReference type="PROSITE" id="PS50862">
    <property type="entry name" value="AA_TRNA_LIGASE_II"/>
    <property type="match status" value="1"/>
</dbReference>
<gene>
    <name evidence="1" type="primary">proS</name>
    <name type="ordered locus">Dvul_1723</name>
</gene>
<accession>A1VE74</accession>
<evidence type="ECO:0000255" key="1">
    <source>
        <dbReference type="HAMAP-Rule" id="MF_01569"/>
    </source>
</evidence>
<sequence length="574" mass="63025">MRWSRCYIPTLKEAPSDAEVVSHKLLVRAGMIRKLTSGIYTFMPMGLRALNKVAAIVREEMNRAGAQEVLMPMVQPADLWQETGRWEFYGKELLRFRDRNDRDYCLGPTHEEVITDLVRGEVRSYRQLPINLYQIQTKFRDEIRPRFGLMRGREFVMKDAYSFDRDQAGCDESYKAMYTAYQRIFSRLGLRFRAVEADSGSIGGSFSHEFMVLADTGEDTLAVCTACEYAANVERAEVTGTPCTRPAAAALAEVPTPGAHTIEEVSAFLGVSADMLVKTLLFVADGEPVAALVRGDRELNEVKLKNLLGADSLELATPEQVEAWTGAPVGFAGPVGLHGVKRVFADTELEGDAGWIVGANKADTHLREVSLTRDAAIEAYADLRMITASDPCPRCGGAVELPKGIEVGHVFKLGLKYSKSMNATFLDENGKEQVMVMGCYGIGVSRVVASCIEQNNDGDGIVFPPPIAPYEVALLLLDPKNEEAAAKAAEIESFLEAEGHDVLLDDRDERPGVKFKDADLIGSPYQLVLGGKGLARGVVEAKNRRSGEKTELPVEGFAEAFRDWRAGVLKGWGL</sequence>
<comment type="function">
    <text evidence="1">Catalyzes the attachment of proline to tRNA(Pro) in a two-step reaction: proline is first activated by ATP to form Pro-AMP and then transferred to the acceptor end of tRNA(Pro). As ProRS can inadvertently accommodate and process non-cognate amino acids such as alanine and cysteine, to avoid such errors it has two additional distinct editing activities against alanine. One activity is designated as 'pretransfer' editing and involves the tRNA(Pro)-independent hydrolysis of activated Ala-AMP. The other activity is designated 'posttransfer' editing and involves deacylation of mischarged Ala-tRNA(Pro). The misacylated Cys-tRNA(Pro) is not edited by ProRS.</text>
</comment>
<comment type="catalytic activity">
    <reaction evidence="1">
        <text>tRNA(Pro) + L-proline + ATP = L-prolyl-tRNA(Pro) + AMP + diphosphate</text>
        <dbReference type="Rhea" id="RHEA:14305"/>
        <dbReference type="Rhea" id="RHEA-COMP:9700"/>
        <dbReference type="Rhea" id="RHEA-COMP:9702"/>
        <dbReference type="ChEBI" id="CHEBI:30616"/>
        <dbReference type="ChEBI" id="CHEBI:33019"/>
        <dbReference type="ChEBI" id="CHEBI:60039"/>
        <dbReference type="ChEBI" id="CHEBI:78442"/>
        <dbReference type="ChEBI" id="CHEBI:78532"/>
        <dbReference type="ChEBI" id="CHEBI:456215"/>
        <dbReference type="EC" id="6.1.1.15"/>
    </reaction>
</comment>
<comment type="subunit">
    <text evidence="1">Homodimer.</text>
</comment>
<comment type="subcellular location">
    <subcellularLocation>
        <location evidence="1">Cytoplasm</location>
    </subcellularLocation>
</comment>
<comment type="domain">
    <text evidence="1">Consists of three domains: the N-terminal catalytic domain, the editing domain and the C-terminal anticodon-binding domain.</text>
</comment>
<comment type="similarity">
    <text evidence="1">Belongs to the class-II aminoacyl-tRNA synthetase family. ProS type 1 subfamily.</text>
</comment>
<keyword id="KW-0030">Aminoacyl-tRNA synthetase</keyword>
<keyword id="KW-0067">ATP-binding</keyword>
<keyword id="KW-0963">Cytoplasm</keyword>
<keyword id="KW-0436">Ligase</keyword>
<keyword id="KW-0547">Nucleotide-binding</keyword>
<keyword id="KW-0648">Protein biosynthesis</keyword>
<reference key="1">
    <citation type="journal article" date="2009" name="Environ. Microbiol.">
        <title>Contribution of mobile genetic elements to Desulfovibrio vulgaris genome plasticity.</title>
        <authorList>
            <person name="Walker C.B."/>
            <person name="Stolyar S."/>
            <person name="Chivian D."/>
            <person name="Pinel N."/>
            <person name="Gabster J.A."/>
            <person name="Dehal P.S."/>
            <person name="He Z."/>
            <person name="Yang Z.K."/>
            <person name="Yen H.C."/>
            <person name="Zhou J."/>
            <person name="Wall J.D."/>
            <person name="Hazen T.C."/>
            <person name="Arkin A.P."/>
            <person name="Stahl D.A."/>
        </authorList>
    </citation>
    <scope>NUCLEOTIDE SEQUENCE [LARGE SCALE GENOMIC DNA]</scope>
    <source>
        <strain>DP4</strain>
    </source>
</reference>
<organism>
    <name type="scientific">Nitratidesulfovibrio vulgaris (strain DP4)</name>
    <name type="common">Desulfovibrio vulgaris</name>
    <dbReference type="NCBI Taxonomy" id="391774"/>
    <lineage>
        <taxon>Bacteria</taxon>
        <taxon>Pseudomonadati</taxon>
        <taxon>Thermodesulfobacteriota</taxon>
        <taxon>Desulfovibrionia</taxon>
        <taxon>Desulfovibrionales</taxon>
        <taxon>Desulfovibrionaceae</taxon>
        <taxon>Nitratidesulfovibrio</taxon>
    </lineage>
</organism>